<reference key="1">
    <citation type="journal article" date="1998" name="Science">
        <title>Genome sequence of the nematode C. elegans: a platform for investigating biology.</title>
        <authorList>
            <consortium name="The C. elegans sequencing consortium"/>
        </authorList>
    </citation>
    <scope>NUCLEOTIDE SEQUENCE [LARGE SCALE GENOMIC DNA]</scope>
    <scope>ALTERNATIVE SPLICING</scope>
    <source>
        <strain>Bristol N2</strain>
    </source>
</reference>
<reference key="2">
    <citation type="journal article" date="2005" name="Gravit. Space Biol. Bull.">
        <title>Worms in space? A model biological dosimeter.</title>
        <authorList>
            <person name="Zhao Y."/>
            <person name="Johnsen R."/>
            <person name="Baillie D."/>
            <person name="Rose A."/>
        </authorList>
    </citation>
    <scope>TISSUE SPECIFICITY</scope>
</reference>
<protein>
    <recommendedName>
        <fullName>Copine family protein 2</fullName>
    </recommendedName>
</protein>
<keyword id="KW-0025">Alternative splicing</keyword>
<keyword id="KW-1185">Reference proteome</keyword>
<evidence type="ECO:0000256" key="1">
    <source>
        <dbReference type="SAM" id="MobiDB-lite"/>
    </source>
</evidence>
<evidence type="ECO:0000269" key="2">
    <source>
    </source>
</evidence>
<evidence type="ECO:0000305" key="3"/>
<accession>Q09221</accession>
<accession>D7SFI9</accession>
<accession>Q10908</accession>
<accession>Q27GU7</accession>
<accession>Q5WRU1</accession>
<accession>Q5WRU2</accession>
<accession>Q5WRU3</accession>
<organism>
    <name type="scientific">Caenorhabditis elegans</name>
    <dbReference type="NCBI Taxonomy" id="6239"/>
    <lineage>
        <taxon>Eukaryota</taxon>
        <taxon>Metazoa</taxon>
        <taxon>Ecdysozoa</taxon>
        <taxon>Nematoda</taxon>
        <taxon>Chromadorea</taxon>
        <taxon>Rhabditida</taxon>
        <taxon>Rhabditina</taxon>
        <taxon>Rhabditomorpha</taxon>
        <taxon>Rhabditoidea</taxon>
        <taxon>Rhabditidae</taxon>
        <taxon>Peloderinae</taxon>
        <taxon>Caenorhabditis</taxon>
    </lineage>
</organism>
<feature type="chain" id="PRO_0000065046" description="Copine family protein 2">
    <location>
        <begin position="1"/>
        <end position="7705"/>
    </location>
</feature>
<feature type="domain" description="VWFA">
    <location>
        <begin position="7475"/>
        <end position="7673"/>
    </location>
</feature>
<feature type="region of interest" description="Disordered" evidence="1">
    <location>
        <begin position="1"/>
        <end position="61"/>
    </location>
</feature>
<feature type="region of interest" description="Disordered" evidence="1">
    <location>
        <begin position="269"/>
        <end position="360"/>
    </location>
</feature>
<feature type="region of interest" description="Disordered" evidence="1">
    <location>
        <begin position="372"/>
        <end position="408"/>
    </location>
</feature>
<feature type="region of interest" description="Disordered" evidence="1">
    <location>
        <begin position="464"/>
        <end position="492"/>
    </location>
</feature>
<feature type="region of interest" description="Disordered" evidence="1">
    <location>
        <begin position="506"/>
        <end position="538"/>
    </location>
</feature>
<feature type="region of interest" description="Disordered" evidence="1">
    <location>
        <begin position="560"/>
        <end position="614"/>
    </location>
</feature>
<feature type="region of interest" description="Disordered" evidence="1">
    <location>
        <begin position="1301"/>
        <end position="1358"/>
    </location>
</feature>
<feature type="region of interest" description="Disordered" evidence="1">
    <location>
        <begin position="4381"/>
        <end position="4427"/>
    </location>
</feature>
<feature type="region of interest" description="Disordered" evidence="1">
    <location>
        <begin position="6779"/>
        <end position="6800"/>
    </location>
</feature>
<feature type="compositionally biased region" description="Low complexity" evidence="1">
    <location>
        <begin position="12"/>
        <end position="25"/>
    </location>
</feature>
<feature type="compositionally biased region" description="Basic and acidic residues" evidence="1">
    <location>
        <begin position="269"/>
        <end position="282"/>
    </location>
</feature>
<feature type="compositionally biased region" description="Low complexity" evidence="1">
    <location>
        <begin position="302"/>
        <end position="313"/>
    </location>
</feature>
<feature type="compositionally biased region" description="Basic residues" evidence="1">
    <location>
        <begin position="318"/>
        <end position="336"/>
    </location>
</feature>
<feature type="compositionally biased region" description="Basic and acidic residues" evidence="1">
    <location>
        <begin position="372"/>
        <end position="404"/>
    </location>
</feature>
<feature type="compositionally biased region" description="Polar residues" evidence="1">
    <location>
        <begin position="522"/>
        <end position="532"/>
    </location>
</feature>
<feature type="compositionally biased region" description="Basic and acidic residues" evidence="1">
    <location>
        <begin position="560"/>
        <end position="587"/>
    </location>
</feature>
<feature type="compositionally biased region" description="Polar residues" evidence="1">
    <location>
        <begin position="588"/>
        <end position="597"/>
    </location>
</feature>
<feature type="compositionally biased region" description="Basic and acidic residues" evidence="1">
    <location>
        <begin position="598"/>
        <end position="611"/>
    </location>
</feature>
<feature type="compositionally biased region" description="Basic and acidic residues" evidence="1">
    <location>
        <begin position="1301"/>
        <end position="1335"/>
    </location>
</feature>
<feature type="compositionally biased region" description="Low complexity" evidence="1">
    <location>
        <begin position="4397"/>
        <end position="4409"/>
    </location>
</feature>
<feature type="compositionally biased region" description="Basic and acidic residues" evidence="1">
    <location>
        <begin position="4411"/>
        <end position="4427"/>
    </location>
</feature>
<feature type="compositionally biased region" description="Basic and acidic residues" evidence="1">
    <location>
        <begin position="6779"/>
        <end position="6797"/>
    </location>
</feature>
<feature type="splice variant" id="VSP_041754" description="In isoform e." evidence="3">
    <location>
        <begin position="1"/>
        <end position="5003"/>
    </location>
</feature>
<feature type="splice variant" id="VSP_041755" description="In isoform a." evidence="3">
    <location>
        <begin position="1258"/>
        <end position="7329"/>
    </location>
</feature>
<feature type="splice variant" id="VSP_041756" description="In isoform d." evidence="3">
    <original>DEHGLEPDQQVSKQLSSIERQLLKLDEVVIGN</original>
    <variation>SSSVRSSSIYIELGDDMEIICEHNTKQAILVY</variation>
    <location>
        <begin position="1348"/>
        <end position="1379"/>
    </location>
</feature>
<feature type="splice variant" id="VSP_041757" description="In isoform d." evidence="3">
    <location>
        <begin position="1380"/>
        <end position="7705"/>
    </location>
</feature>
<proteinExistence type="evidence at transcript level"/>
<name>CPNA2_CAEEL</name>
<dbReference type="EMBL" id="FO080130">
    <property type="protein sequence ID" value="CCD61447.1"/>
    <property type="molecule type" value="Genomic_DNA"/>
</dbReference>
<dbReference type="EMBL" id="FO080130">
    <property type="protein sequence ID" value="CCD61455.1"/>
    <property type="molecule type" value="Genomic_DNA"/>
</dbReference>
<dbReference type="EMBL" id="FO080130">
    <property type="protein sequence ID" value="CCD61456.1"/>
    <property type="molecule type" value="Genomic_DNA"/>
</dbReference>
<dbReference type="EMBL" id="FO080130">
    <property type="protein sequence ID" value="CCD61457.1"/>
    <property type="molecule type" value="Genomic_DNA"/>
</dbReference>
<dbReference type="RefSeq" id="NP_001021884.1">
    <molecule id="Q09221-4"/>
    <property type="nucleotide sequence ID" value="NM_001026713.4"/>
</dbReference>
<dbReference type="RefSeq" id="NP_001040723.1">
    <molecule id="Q09221-5"/>
    <property type="nucleotide sequence ID" value="NM_001047258.3"/>
</dbReference>
<dbReference type="RefSeq" id="NP_495623.2">
    <molecule id="Q09221-2"/>
    <property type="nucleotide sequence ID" value="NM_063222.2"/>
</dbReference>
<dbReference type="RefSeq" id="NP_495625.3">
    <molecule id="Q09221-1"/>
    <property type="nucleotide sequence ID" value="NM_063224.6"/>
</dbReference>
<dbReference type="SMR" id="Q09221"/>
<dbReference type="BioGRID" id="39583">
    <property type="interactions" value="1"/>
</dbReference>
<dbReference type="FunCoup" id="Q09221">
    <property type="interactions" value="118"/>
</dbReference>
<dbReference type="STRING" id="6239.B0228.4c.1"/>
<dbReference type="PaxDb" id="6239-B0228.4c"/>
<dbReference type="PeptideAtlas" id="Q09221"/>
<dbReference type="EnsemblMetazoa" id="B0228.4a.1">
    <molecule id="Q09221-2"/>
    <property type="protein sequence ID" value="B0228.4a.1"/>
    <property type="gene ID" value="WBGene00015061"/>
</dbReference>
<dbReference type="EnsemblMetazoa" id="B0228.4c.1">
    <molecule id="Q09221-1"/>
    <property type="protein sequence ID" value="B0228.4c.1"/>
    <property type="gene ID" value="WBGene00015061"/>
</dbReference>
<dbReference type="EnsemblMetazoa" id="B0228.4d.1">
    <molecule id="Q09221-4"/>
    <property type="protein sequence ID" value="B0228.4d.1"/>
    <property type="gene ID" value="WBGene00015061"/>
</dbReference>
<dbReference type="EnsemblMetazoa" id="B0228.4e.1">
    <molecule id="Q09221-5"/>
    <property type="protein sequence ID" value="B0228.4e.1"/>
    <property type="gene ID" value="WBGene00015061"/>
</dbReference>
<dbReference type="GeneID" id="174250"/>
<dbReference type="KEGG" id="cel:CELE_B0228.4"/>
<dbReference type="UCSC" id="B0228.4a">
    <molecule id="Q09221-1"/>
    <property type="organism name" value="c. elegans"/>
</dbReference>
<dbReference type="AGR" id="WB:WBGene00015061"/>
<dbReference type="CTD" id="174250"/>
<dbReference type="WormBase" id="B0228.4a">
    <molecule id="Q09221-2"/>
    <property type="protein sequence ID" value="CE31282"/>
    <property type="gene ID" value="WBGene00015061"/>
    <property type="gene designation" value="cpna-2"/>
</dbReference>
<dbReference type="WormBase" id="B0228.4c">
    <molecule id="Q09221-1"/>
    <property type="protein sequence ID" value="CE44996"/>
    <property type="gene ID" value="WBGene00015061"/>
    <property type="gene designation" value="cpna-2"/>
</dbReference>
<dbReference type="WormBase" id="B0228.4d">
    <molecule id="Q09221-4"/>
    <property type="protein sequence ID" value="CE37471"/>
    <property type="gene ID" value="WBGene00015061"/>
    <property type="gene designation" value="cpna-2"/>
</dbReference>
<dbReference type="WormBase" id="B0228.4e">
    <molecule id="Q09221-5"/>
    <property type="protein sequence ID" value="CE39660"/>
    <property type="gene ID" value="WBGene00015061"/>
    <property type="gene designation" value="cpna-2"/>
</dbReference>
<dbReference type="eggNOG" id="KOG1327">
    <property type="taxonomic scope" value="Eukaryota"/>
</dbReference>
<dbReference type="GeneTree" id="ENSGT00940000168644"/>
<dbReference type="HOGENOM" id="CLU_222795_0_0_1"/>
<dbReference type="InParanoid" id="Q09221"/>
<dbReference type="OMA" id="YTINALQ"/>
<dbReference type="OrthoDB" id="5855668at2759"/>
<dbReference type="PRO" id="PR:Q09221"/>
<dbReference type="Proteomes" id="UP000001940">
    <property type="component" value="Chromosome II"/>
</dbReference>
<dbReference type="Bgee" id="WBGene00015061">
    <property type="expression patterns" value="Expressed in pharyngeal muscle cell (C elegans) and 3 other cell types or tissues"/>
</dbReference>
<dbReference type="GO" id="GO:0005634">
    <property type="term" value="C:nucleus"/>
    <property type="evidence" value="ECO:0000318"/>
    <property type="project" value="GO_Central"/>
</dbReference>
<dbReference type="GO" id="GO:0004842">
    <property type="term" value="F:ubiquitin-protein transferase activity"/>
    <property type="evidence" value="ECO:0000318"/>
    <property type="project" value="GO_Central"/>
</dbReference>
<dbReference type="GO" id="GO:0016567">
    <property type="term" value="P:protein ubiquitination"/>
    <property type="evidence" value="ECO:0000318"/>
    <property type="project" value="GO_Central"/>
</dbReference>
<dbReference type="CDD" id="cd01459">
    <property type="entry name" value="vWA_copine_like"/>
    <property type="match status" value="1"/>
</dbReference>
<dbReference type="InterPro" id="IPR010734">
    <property type="entry name" value="Copine_C"/>
</dbReference>
<dbReference type="InterPro" id="IPR052079">
    <property type="entry name" value="E3_ligase/Copine_domain"/>
</dbReference>
<dbReference type="InterPro" id="IPR002035">
    <property type="entry name" value="VWF_A"/>
</dbReference>
<dbReference type="PANTHER" id="PTHR45751">
    <property type="entry name" value="COPINE FAMILY PROTEIN 1"/>
    <property type="match status" value="1"/>
</dbReference>
<dbReference type="PANTHER" id="PTHR45751:SF11">
    <property type="entry name" value="COPINE FAMILY PROTEIN 2"/>
    <property type="match status" value="1"/>
</dbReference>
<dbReference type="Pfam" id="PF07002">
    <property type="entry name" value="Copine"/>
    <property type="match status" value="1"/>
</dbReference>
<dbReference type="SMART" id="SM00327">
    <property type="entry name" value="VWA"/>
    <property type="match status" value="1"/>
</dbReference>
<comment type="alternative products">
    <event type="alternative splicing"/>
    <isoform>
        <id>Q09221-1</id>
        <name>c</name>
        <sequence type="displayed"/>
    </isoform>
    <isoform>
        <id>Q09221-2</id>
        <name>a</name>
        <sequence type="described" ref="VSP_041755"/>
    </isoform>
    <isoform>
        <id>Q09221-4</id>
        <name>d</name>
        <sequence type="described" ref="VSP_041756 VSP_041757"/>
    </isoform>
    <isoform>
        <id>Q09221-5</id>
        <name>e</name>
        <sequence type="described" ref="VSP_041754"/>
    </isoform>
</comment>
<comment type="tissue specificity">
    <text evidence="2">Expressed in body wall muscle.</text>
</comment>
<comment type="similarity">
    <text evidence="3">Belongs to the copine family.</text>
</comment>
<sequence>MNDYEIRDLTGSSQKSNNQKISNNSGESAHFNGTSENVKTESDDDSTCSSSLNKLSNRHSEPMNHLSVGGFVAKDLLSSLTIPLPQTVIRTCQSIDIDTPDRSRNDKTLTSFFYSSCKNLLLTTIIPDPLDLVAAAVGQSTAQALLVAQIGWMVCVCCRCCLCKCIANGRGVRGQKKQIQEPTIADDDGRDLPYEVPGSIHIPKPVYNKKLSKSRSSSVPHVSVPSLVSSSADYKRLSMWETSLNVESDVEPLHTPPLVVGRKLDYIDKEGNNPSCCRERGTRKPGFRPLRGSGSPPPPDPSTSTKVAVTSASEVKKIKDHKKQLKKEKEKKKKMDKKQSSSGGGFFTRWFGGSGSNNSQQNLAEDVIDARSERKTAKQREQELLQRSERRSGGRTHSHEEYRRHQQPSLMVNTNFDEDDYATIDRVRRSNNREMSMPASPRNVHFVDETSGPLSRTMNESAFGDRAHLQYRPRAQKGAAGPTTRGAPTSSVNQLDEATLDLLRLSTEPSPVPSRRALPKSASLSSVQQKQPIKTADGGQLKIGSVYTWDQNSVDTTTDDERAKDFLRGDRSSRLSPQSERKNERQIQIRQQSSGPTNRRETEIEYEEKRQGPPVVRTTVEGKLKMEKIVGADLITVDSCISSAWTVRDTVTNYKIKSTIGKKSLILEEIKDGQSKYKITLIENGETKMEREASLDVPDFVNKKDYLAEVSKKLLSDLREDSESVSALTHIEVEIVEDVTNILKTYVIGERADDVLAEEQLRLHYEQTADKTPSPIPLEKVEKIYVDELQKDKIELEDPEKADIHLIKDGRHFEGEGALKRIRRFETEESIEKPTVIRMEPRCAHAFADCDVAKKDDTSNYTVKIAVPLVHTITFLLKKSKMMRQQKAAGYEMEQEGQRFEDETTLRRIKRYETEEEEEKQHVAVIQHVEEVKVATMKTQREVEAEGGQYEMSQEGIHLRGETTFKKRGKHLDSESSEERFMEREAEGGQYAMQMEGERLLGEKKFRSKGRHYESESEESMASWNGGSPTLVDLVKKESSSIFEATFETANNHSPIVAEVRRPKLKKENTTIGCTISNQKATSANAELTTKHVNTEKGSGKFRELGEEQAMMLCGFENQKSSKEEVTGSRQQKNEIKVAFAAGSAETENTTISTTIFHDADSFAVEGSSKSANSTATYGRFKEMSEENASNMVYLQKSESSSSNLSGAETKMKHIQRQSSEARFSEFKQVAESCAVMIKNTGVERGSTSSTVAEAATDLRIRRKDAKGEIIVFVLFKRVFGNYVHASMRLASSGSGLLRENRSELREMRSEEKRSNSMHHEESHYAHSSYEHTSEHYSQSSFYHQESDEHGLEPDQQVSKQLSSIERQLLKLDEVVIGNECTDVVEVKVTIKKREQNANQLIVVLEELLETAICGGIREIKRSIVDTSLESRVRKLEQSSLYSIIKKSSSKESVVHCGKPPLERQASLEGRFRMEESWSAVECKRRSSSIDRASLKLRASQEEVCTGFWNTSKGESTRRTILQKTKSVESMCLKTKSASSTSIDMFSDCQRATVSQTISTEIASHRREIVAAAFGISTQSLERLLKFVEIIDWENITMNVSQKEQLSANLQALTSAPVNLDIPSDLGRIVAPAEQDAYSDLIMRERAESRVFAQLRASADEITIREVALGSMSQLEQAAFMSLLITSVSRCDLRTIAPSNIIANTEIFYDVAEEKMSVSGVMKRESRKEHSSKKFTSSREEIIQGFWKGERDEERVVKTLKDRMVSFKHSLSVEAASSTSENVSLGMRKADQKSEFTISQKLSPKEIVSEAYGVSESKLDQFFQVMEKMDWSNIELGEKEHTALSANIRTLAPEQKVCDGILGKLKAPKQQDESVGTQIQEIRRATAVMSVRASLLLTISSNSNFSKNISDSEKAVFSNLISVITSHNLSTIGTSSETTTASISYQDIPEMLAASKLWISRNSEKLKKEIREPVIQTVESFWNTTNDQEKVAVLLNEKIDSIYSSLNTLAASMENEIISQELVRHTENAGKVNIKPISPRELVSSSFKITSSDLQQFFNVLEKMDWSQISLPAQEHAIISKNVRSLAPSASELSNILGKLRAPEMQEETTDLKIRQAQQARVVLNVSESMSNTISSSETFSRIPENKKATLTNLVGIITTQDLSTLGASSENQTIEMDYTEAKEELEASKKLVDKNLSVLKTEIRESGDEVVQGFWNTASDKEKVGAIICEKLKSIHHTLHTHAIRTVTESLSTDIQKEQQKLSTHHFVKLSTRDVVQAAFRISSESVDHLLTLVEKMDWSKIDLVEPVYSNISSNVQALATSSSQSSGILGKLLPPAPEEETTSKEIREINTAKCILNVISSLNSTITSDASLDMISESEQAIFSNIIGVMASNNLTTSSQSTSSSFGFNNVFELSEARRVLQESNKQNLIQKVRESSEELIHGIWSTASETEKVAIVVKEKLETVHQAMKTLAIQMATQSVNSELIGSEGNLASIKSITLPTREVISAAFGISNEVIQKMLEVLTKGEWSTISLPQSEYESISQNVRALAEPSFNCDSILGKINAPGPQTETTSHELIEKNTAAAVANVKAAVESVISKESSLAKLPADEKAIITNLAGLVLSKDVSSLCTSSETFGFDQRIFRNQNANISLGAVRSETLLQRLREPIENQVQGFWSTASNQEKASFIAKQKLDTMYDTMKVIAIQMISQTIDGDFSSASISSETFKNIDKAAREVVAAEFGIANESVQKALEVLNKVEWSDISLPEKLHQNISSNVRVLADSSYNCDSIIGKLNAPEPQSAYVDQQISEHQTLEVIANIKSAVSSVISNDSVLSKRSEDEKAVISNIANLIISCDLASMSSTSNSFEFQRDILEPQNANVLLGTPASQVFTRNLQEPIQSEVQGFWSTNSSQEKASLVIRQKLNVKYDAMKMMATEIAYQSLNSNITSEETNLESQKSFDKSIRESIMASFGVSSEHVQKTLEILSKSELSTIVLPAVEYEATVQNIKALSEPNFNCESILGKLNAPDPQSAVMDIIMNEQRKLTVVSNIQSAIESVISNDSSLEKLTEVDKSVILKISEIIVSHDLTALSSSCSDFNLLQESNTQEKADIFLKTPNSQMLIERLREPIEKQVQGFWSTASNSEKQEMFLKEKVETIHAMLQTFSASLVSETVQRDFMATVQSLAALRSIQLTPREILCAAFGISNEQIEQTFRGLDEVDWSHIDIPCALRDNLLVNLRIVNADAPNVFGNLISRPDENQETSTVLEEKNRIQFLLNLQRSLDQTVQMTSSLTRSDERIEVKVSNIISLISSENLGDLISQAVQLAQPNMSDETEKSFEIPRNILLNRVVPETSEESIQSFWKTSQLAEEASSTISEKLSMLQSEFVVSAAKQVSTSLTLDYRRKIFNQNSEIIFGDLTRDVVKAAFSVSDETLNTLFSQLEQSDWSQIKLSSKQKSILSANIKSLATSNLDTLIGQLMPREADSEQSEASLSERSSVEMENTFKIQQIIFDTVVRKFGSDEERASIINLIGLLTSVNLKAAIQVASFERLPDSLDSTASITPVFKIQEHVRQPTEQVVQGFWSKERHPNETVEVVNRKIEVLKSILNCYAVAECHKSLERSLEKPSQQDETCATRGVTEVVQNAFAVTEQSYSKILKVLGSMQNFEIPEAVKETISKNLKILNLPPVDTLLVSKYKESHVSKTVEEQELVQFMFNFKSALNSEIEMSQNVSKCIEEETVVLPNLVAILASANLATIVPTESRQLSDSENILNFSIQHEESERSAATVRDEINILRHYLQTFAIQKASSEVSRVIEIIKTSQSFHLVHTTMLEEIKTIQLRMEVLKRVSMNQSTAEELLQEAFQNSEQQMETFQRIVQNVHWEETKLTEEIIRNLRINMTAIPRFESTVGSLKAPDDQHESADSYISSTRRAEAVINLMAAADNAISTSSTLSMMESDERLLHKTILKTMAVCNLTTPASRSETETMTQGFYQKVEQCQTEQELAERPKINCEMKVLEISDDEVHGIWSSRKEQESSQKILLASELEKATLQTLASGDETNSIYTELASFGTREEIEKLVSIELRDIVEKSFGVSEESLNKLLNLIPKMDWSSLTMPIVQKELVIKNLALLLPAEALIMESVGTIQAPPEEEAFAELDLKQAREAKVMMDIQECVFTTCTGYTEMNKPDDAEITTFSALLGTLSICDLVTMASSNIQVDSKYDYYRRPAPKNAETTFTESNADAFSLALQEAGEVTSSGIWSTVSNSDAAKTTVSDKLISISKTEMSMKAVSENAVNQDHSLKKDSIEAVEMNIPDSRKEILQKNYSIDRSNSTVEMQGAIASEDIAIQYSAPRVDNVSQTMRSQSQKDLLFGGSFGELEPPLPQEEDVETTARQSRVYRSSSQVRAPSEESIQKTEALRRSESLESNARKTFVDRRRENVSLSRKASVERETNMEARVAKADQSIPVETLQKSKKQESIFSSVVESKDLNVCGSWTTAKPPIGAKVSLQTKKVEKEVTSATMTVASASVECEVGLESKREQSRDATGSMVRAKSIEEVEREFGVEVTSTEKTLEKRDQIESWIKSIPQRLEVEESAEFGNDEVIIGGVMGSLEAPLEQEEETEKLLTMKRSASEARSLKAATKESIEEADEFSKIEADQEILTVQKELVKATGILNAAASREINASSKMEYSKVPSEDVIELSLTESRRQSNSGQFKETKEEEIVGLWNTGTKGENASKVLPHKPPIDTASMKAKAAKQNSIEMTGSLQKSPSAEAMGIVSQKVTEGANSKFGIAQGAVETTLTASAQSGVTCRDISVSNIGVASETVTQFSNKETGIGFGASNLIAPPPESAETEFTGKISNLSQTSLNKMAASDVGTTVESKIQAPGDNYGDVSLLQKVASSDAITKAMQASRDSAISVDFRQDRETVSAEKSDLNFKSTNSETQKLKLFESKEEESGIFIRSSHEYEETQKTLRHRSASRESASRTVTAPTNQEVQMNFDKKVEDSVAEGSLSIGIVRESSQSEVMQHAERTSELTKLSMNEEVAGVRAVSETTNETFRGYQQGDVEVQTGAAMGRIEAPRPQRGEAEITQKLRRTLSVERSAKASEMAESQTVTQIQKREDSLASEYSVRDTLLLKSSSVSHVATEQMSEHLVMRSKSEHHISEKLQERLIEKESFSSQEFISENQGVHTHWDVIDNNGDALICWKSSETEQKSLDAKQVTEELAGTTLDLSVRLLGGTDEEKIAEHVIVGASEVLNISETRADMEMSRQDAFSDDATYVASDILEERSLSTVHEFGESEASTTFGVGKLVTKKPEKEEVGRSFSETRKLSQFSDITAISETTTDMDSEILRLPECDQSVTLISHKNQQKDVKDLKATVENTADQVTLLEKREVREQSADVKKKKFEVEDIEEVLPMIRRWAEILSMKASTSVEIQAENKLSKPEAQAESQKYLKTANLEINKINVNATHEEVMSATTALECKTSGQDVASIRLRDKSRERVEKKYQENQWNLLSTNAEWETLLNDLEDSVTIAQSVQDSMAFSVKASATVNLNSDTSIKKAQPEIGIQKSISQSNVEKTVGQFSSATIGNELLVTRLGMDLEEIETLVDEINREQAVGGRIREFGKSETGGGIYLVRRALPKVKETSTHTVTVATSFRQIFSTMSAGDEISEANVELTIPSTSVGAEIKSTVARSDSMTFSTSHASEYTASTVADYARDIAVSASTAARKKAIPTERTSQKLKEVGADGIEILSLWEGIETDLDATTQLVDLLRVKSSLQTIESSEEVERINQYLEMPEEKGLVIHLINVQNKETCERNFAVSICSLDTVHSRKSEIPPTYSVSKVLTEKRVLRETWRVIESGDVRFNAVINLHRYSLSKPTLAQETVLREVVRIAAQPLFISAEPTYMRTKESSEDIVGVGIAYNVPEENLISAIKLDEKASGGCYELTTKAAGDEYKMISSILSKTQAVEKVKGKMIQKVVAKDEIRVLETTTESVNANFNYEIPEENFKIGIAKTCANNAAPFTMRLHECLDFYVKMFYNMNKKDDFESLIKTIIISNGIESKTLSCTAAEHIEATRNPEFNRPAEFSDIQKTVVDYNKIEGASLNTFEALNEKMALSTMLSRQDDYSRVEHIVKDKNRGANLKFRFIESSEEKQTTFSAFEIDTEKEEIERTIDLVRQGGQFKLSTDAAEENEITLHRDISKPIITHYDTLHLITLSNSAPHQILSTSGASNELHTISTQLSKPAEWLNTELLIVDKNVEQPVTWRVLECEECVENLHPIYRRPDDIFDLDEIWHIARNGGKFERRCKASGDEKEIFEQEIKSRGIKDDIIDKKFIVGNQGEPTSFTTIQTSSVSASVSQDMSRLGEKEAIKKVLQNSNKGINVEKKMIEATEYRETISEQFRKNDEFDKADLTVKDRRAGGSYELSTNASEQSSSSVSNELICPRPSQLSIEKTFITAQTIIPAILSCKASESIGHTISEQWNRPNDQFAISQIVKDCNKENEQFTFREAGEEYHTTNCFYTREQEEKVIAKTLHEARKGSGQTFETKHATDRSMDASQHLEKDRLAEATAEKLFVIGNTAGPVSYSSKSSSDIQHSQVVNLSRPSPYVQVEIIRKGANLGTPTYFHARETTSKTENVATQLSRKEEKMEVSTTHTTPLLAEPVTFDSNASKSHSTSLDKNLVASEDYELDAVVIIVDNNTEQPQFFRCSCTKEASTSAAAALSAGSKSESCKIVRLASNLGHPTSLVLCESSSVQETNNVHYQRDEHHEHISETKSYPRDGGKFTLDTKASTANEVRIDKDLEKKSDRELETEIKTIVRNEGEPVEIFVSATEESAAGVTTSLSRANPFESANILLTSPNKGEPAYSRVTESSELTETNNVQLRREEEHQETEKIIEIAANGGSSLLRAGFADEKFADIEAKLGKDAQFESAQTIRQIGNEDKTNLSIGASQETSVTFDETVQCNKSSCEETSITKVAKNIEPHVIFRSTEASDMAVGIHYTLRSSEKVEETEEIKNIARNGGSATFSCFASGDESPDSVSAFLTRQPQEETTEKLFPTPMFDFIKFNSTAAEEFAVWNTTIFRRKDNEGEVEKIFNTSEAGHNETFSANAAEDVSVTLDADLHFGVGYKEHRQITKDEANQGEGTGMHSGASEETIFNLGYDYCKQPTEFTTVCVTEDKLLIQGAYGFRAAKEESITLDADLHFGVNYRDLLAMGLHASNNEIEGTGMRSTASEETIFNLAYDYCKQPTEFRTVFVSEDHQFVHGAFGFRAVGEEHIETQVLELQARMVEVMVEGSVHNLARRHEDEPFVLYTEVIEETIIRVDEQLEKKTTVIETEQASEVKMREKGEERRKEEKRVSFAAEVQEKTMEAIDKSLGLDTSMEVEPAFQKPSIIKKPMKKERERRSRDLRQNAAPAFKPVRRNSLLQALAIGSPHNIPHFKTLDDIVKAIKHAGLEYSNLIFGIDYTKSNFYQGERTFDKRPLHTIDPAEMNPYQQVIQIVGKTLSSFDADGQIPAYGFGDEEFTDHGIFNIAERYDLEKDCNGFEEVLRVYNEVTPTIEMSGPTNFVPLIDRAIEICKEKHSYHILVIVADGQVTNEKINQKAIAAASHYPLSIIMVGVGDGPWNMMGRFDDNIPKRLFDNFHFVDFHKVMFNAPNADASFALNALMEIPDQYKAIKELGLLKHSRRG</sequence>
<gene>
    <name type="primary">cpna-2</name>
    <name type="ORF">B0228.4</name>
</gene>